<proteinExistence type="evidence at protein level"/>
<comment type="function">
    <text>May function as a trigger protein which interacts with a larger protein. May mediate calcium-dependent signal transduction events in the growth cones and axons of a small group of sensory neurons which fasciculate in a single axon tract.</text>
</comment>
<comment type="subcellular location">
    <subcellularLocation>
        <location>Cytoplasm</location>
    </subcellularLocation>
</comment>
<comment type="tissue specificity">
    <text>Selectively expressed in a small group of neurons.</text>
</comment>
<evidence type="ECO:0000255" key="1">
    <source>
        <dbReference type="PROSITE-ProRule" id="PRU00448"/>
    </source>
</evidence>
<evidence type="ECO:0007829" key="2">
    <source>
        <dbReference type="PDB" id="1YX7"/>
    </source>
</evidence>
<dbReference type="EMBL" id="U22066">
    <property type="protein sequence ID" value="AAC46630.1"/>
    <property type="molecule type" value="mRNA"/>
</dbReference>
<dbReference type="PIR" id="A57231">
    <property type="entry name" value="A57231"/>
</dbReference>
<dbReference type="PDB" id="1YX7">
    <property type="method" value="NMR"/>
    <property type="chains" value="A=1-83"/>
</dbReference>
<dbReference type="PDB" id="1YX8">
    <property type="method" value="NMR"/>
    <property type="chains" value="A=1-83"/>
</dbReference>
<dbReference type="PDBsum" id="1YX7"/>
<dbReference type="PDBsum" id="1YX8"/>
<dbReference type="BMRB" id="Q25088"/>
<dbReference type="SMR" id="Q25088"/>
<dbReference type="EvolutionaryTrace" id="Q25088"/>
<dbReference type="GO" id="GO:0005737">
    <property type="term" value="C:cytoplasm"/>
    <property type="evidence" value="ECO:0007669"/>
    <property type="project" value="UniProtKB-SubCell"/>
</dbReference>
<dbReference type="GO" id="GO:0005509">
    <property type="term" value="F:calcium ion binding"/>
    <property type="evidence" value="ECO:0007669"/>
    <property type="project" value="InterPro"/>
</dbReference>
<dbReference type="CDD" id="cd00051">
    <property type="entry name" value="EFh"/>
    <property type="match status" value="1"/>
</dbReference>
<dbReference type="Gene3D" id="1.10.238.10">
    <property type="entry name" value="EF-hand"/>
    <property type="match status" value="1"/>
</dbReference>
<dbReference type="InterPro" id="IPR011992">
    <property type="entry name" value="EF-hand-dom_pair"/>
</dbReference>
<dbReference type="InterPro" id="IPR018247">
    <property type="entry name" value="EF_Hand_1_Ca_BS"/>
</dbReference>
<dbReference type="InterPro" id="IPR002048">
    <property type="entry name" value="EF_hand_dom"/>
</dbReference>
<dbReference type="Pfam" id="PF13499">
    <property type="entry name" value="EF-hand_7"/>
    <property type="match status" value="1"/>
</dbReference>
<dbReference type="SMART" id="SM00054">
    <property type="entry name" value="EFh"/>
    <property type="match status" value="2"/>
</dbReference>
<dbReference type="SUPFAM" id="SSF47473">
    <property type="entry name" value="EF-hand"/>
    <property type="match status" value="1"/>
</dbReference>
<dbReference type="PROSITE" id="PS00018">
    <property type="entry name" value="EF_HAND_1"/>
    <property type="match status" value="2"/>
</dbReference>
<dbReference type="PROSITE" id="PS50222">
    <property type="entry name" value="EF_HAND_2"/>
    <property type="match status" value="2"/>
</dbReference>
<protein>
    <recommendedName>
        <fullName>Calsensin</fullName>
    </recommendedName>
    <alternativeName>
        <fullName>LAN3-6 antigen</fullName>
    </alternativeName>
</protein>
<reference key="1">
    <citation type="journal article" date="1995" name="J. Cell Biol.">
        <title>Calsensin: a novel calcium-binding protein expressed in a subset of peripheral leech neurons fasciculating in a single axon tract.</title>
        <authorList>
            <person name="Briggs K.K."/>
            <person name="Silvers A.J."/>
            <person name="Johansen K.M."/>
            <person name="Johansen J."/>
        </authorList>
    </citation>
    <scope>NUCLEOTIDE SEQUENCE [MRNA]</scope>
</reference>
<organism>
    <name type="scientific">Haemopis marmorata</name>
    <name type="common">Green horse leech</name>
    <dbReference type="NCBI Taxonomy" id="38567"/>
    <lineage>
        <taxon>Eukaryota</taxon>
        <taxon>Metazoa</taxon>
        <taxon>Spiralia</taxon>
        <taxon>Lophotrochozoa</taxon>
        <taxon>Annelida</taxon>
        <taxon>Clitellata</taxon>
        <taxon>Hirudinea</taxon>
        <taxon>Hirudinida</taxon>
        <taxon>Hirudiniformes</taxon>
        <taxon>Haemopidae</taxon>
        <taxon>Haemopis</taxon>
    </lineage>
</organism>
<keyword id="KW-0002">3D-structure</keyword>
<keyword id="KW-0106">Calcium</keyword>
<keyword id="KW-0963">Cytoplasm</keyword>
<keyword id="KW-0479">Metal-binding</keyword>
<keyword id="KW-0677">Repeat</keyword>
<sequence>MACKVKAELEAAFKKLDANGDGYVTALELQTFMVTLDAYKALSKDKVKEASAKLIKMADKNSDGKISKEEFLNANAELLCQLK</sequence>
<feature type="chain" id="PRO_0000073855" description="Calsensin">
    <location>
        <begin position="1"/>
        <end position="83"/>
    </location>
</feature>
<feature type="domain" description="EF-hand 1" evidence="1">
    <location>
        <begin position="4"/>
        <end position="39"/>
    </location>
</feature>
<feature type="domain" description="EF-hand 2" evidence="1">
    <location>
        <begin position="46"/>
        <end position="81"/>
    </location>
</feature>
<feature type="binding site" evidence="1">
    <location>
        <position position="17"/>
    </location>
    <ligand>
        <name>Ca(2+)</name>
        <dbReference type="ChEBI" id="CHEBI:29108"/>
        <label>1</label>
    </ligand>
</feature>
<feature type="binding site" evidence="1">
    <location>
        <position position="19"/>
    </location>
    <ligand>
        <name>Ca(2+)</name>
        <dbReference type="ChEBI" id="CHEBI:29108"/>
        <label>1</label>
    </ligand>
</feature>
<feature type="binding site" evidence="1">
    <location>
        <position position="21"/>
    </location>
    <ligand>
        <name>Ca(2+)</name>
        <dbReference type="ChEBI" id="CHEBI:29108"/>
        <label>1</label>
    </ligand>
</feature>
<feature type="binding site" evidence="1">
    <location>
        <position position="23"/>
    </location>
    <ligand>
        <name>Ca(2+)</name>
        <dbReference type="ChEBI" id="CHEBI:29108"/>
        <label>1</label>
    </ligand>
</feature>
<feature type="binding site" evidence="1">
    <location>
        <position position="28"/>
    </location>
    <ligand>
        <name>Ca(2+)</name>
        <dbReference type="ChEBI" id="CHEBI:29108"/>
        <label>1</label>
    </ligand>
</feature>
<feature type="binding site" evidence="1">
    <location>
        <position position="59"/>
    </location>
    <ligand>
        <name>Ca(2+)</name>
        <dbReference type="ChEBI" id="CHEBI:29108"/>
        <label>2</label>
    </ligand>
</feature>
<feature type="binding site" evidence="1">
    <location>
        <position position="61"/>
    </location>
    <ligand>
        <name>Ca(2+)</name>
        <dbReference type="ChEBI" id="CHEBI:29108"/>
        <label>2</label>
    </ligand>
</feature>
<feature type="binding site" evidence="1">
    <location>
        <position position="63"/>
    </location>
    <ligand>
        <name>Ca(2+)</name>
        <dbReference type="ChEBI" id="CHEBI:29108"/>
        <label>2</label>
    </ligand>
</feature>
<feature type="binding site" evidence="1">
    <location>
        <position position="65"/>
    </location>
    <ligand>
        <name>Ca(2+)</name>
        <dbReference type="ChEBI" id="CHEBI:29108"/>
        <label>2</label>
    </ligand>
</feature>
<feature type="binding site" evidence="1">
    <location>
        <position position="70"/>
    </location>
    <ligand>
        <name>Ca(2+)</name>
        <dbReference type="ChEBI" id="CHEBI:29108"/>
        <label>2</label>
    </ligand>
</feature>
<feature type="helix" evidence="2">
    <location>
        <begin position="8"/>
        <end position="16"/>
    </location>
</feature>
<feature type="strand" evidence="2">
    <location>
        <begin position="17"/>
        <end position="19"/>
    </location>
</feature>
<feature type="strand" evidence="2">
    <location>
        <begin position="21"/>
        <end position="23"/>
    </location>
</feature>
<feature type="helix" evidence="2">
    <location>
        <begin position="26"/>
        <end position="36"/>
    </location>
</feature>
<feature type="turn" evidence="2">
    <location>
        <begin position="40"/>
        <end position="47"/>
    </location>
</feature>
<feature type="helix" evidence="2">
    <location>
        <begin position="48"/>
        <end position="55"/>
    </location>
</feature>
<feature type="turn" evidence="2">
    <location>
        <begin position="56"/>
        <end position="58"/>
    </location>
</feature>
<feature type="strand" evidence="2">
    <location>
        <begin position="60"/>
        <end position="62"/>
    </location>
</feature>
<feature type="helix" evidence="2">
    <location>
        <begin position="68"/>
        <end position="79"/>
    </location>
</feature>
<name>CLSS_HAEMA</name>
<accession>Q25088</accession>